<feature type="chain" id="PRO_0000118441" description="NADH-ubiquinone oxidoreductase chain 4L">
    <location>
        <begin position="1"/>
        <end position="98"/>
    </location>
</feature>
<feature type="transmembrane region" description="Helical" evidence="3">
    <location>
        <begin position="1"/>
        <end position="21"/>
    </location>
</feature>
<feature type="transmembrane region" description="Helical" evidence="3">
    <location>
        <begin position="27"/>
        <end position="47"/>
    </location>
</feature>
<feature type="transmembrane region" description="Helical" evidence="3">
    <location>
        <begin position="61"/>
        <end position="81"/>
    </location>
</feature>
<geneLocation type="mitochondrion"/>
<gene>
    <name type="primary">MT-ND4L</name>
    <name type="synonym">MTND4L</name>
    <name type="synonym">NADH4L</name>
    <name type="synonym">ND4L</name>
</gene>
<keyword id="KW-0249">Electron transport</keyword>
<keyword id="KW-0472">Membrane</keyword>
<keyword id="KW-0496">Mitochondrion</keyword>
<keyword id="KW-0999">Mitochondrion inner membrane</keyword>
<keyword id="KW-0520">NAD</keyword>
<keyword id="KW-0679">Respiratory chain</keyword>
<keyword id="KW-1278">Translocase</keyword>
<keyword id="KW-0812">Transmembrane</keyword>
<keyword id="KW-1133">Transmembrane helix</keyword>
<keyword id="KW-0813">Transport</keyword>
<keyword id="KW-0830">Ubiquinone</keyword>
<reference key="1">
    <citation type="journal article" date="1999" name="Biol. J. Linn. Soc. Lond.">
        <title>Origin of the Sulawesi macaques (Cercopithecidae: Macaca) as suggested by mitochondrial DNA phylogeny.</title>
        <authorList>
            <person name="Evans B.J."/>
            <person name="Morales J.C."/>
            <person name="Supriatna J."/>
            <person name="Melnick D.J."/>
        </authorList>
    </citation>
    <scope>NUCLEOTIDE SEQUENCE [GENOMIC DNA]</scope>
</reference>
<organism>
    <name type="scientific">Macaca hecki</name>
    <name type="common">Heck's macaque</name>
    <dbReference type="NCBI Taxonomy" id="90382"/>
    <lineage>
        <taxon>Eukaryota</taxon>
        <taxon>Metazoa</taxon>
        <taxon>Chordata</taxon>
        <taxon>Craniata</taxon>
        <taxon>Vertebrata</taxon>
        <taxon>Euteleostomi</taxon>
        <taxon>Mammalia</taxon>
        <taxon>Eutheria</taxon>
        <taxon>Euarchontoglires</taxon>
        <taxon>Primates</taxon>
        <taxon>Haplorrhini</taxon>
        <taxon>Catarrhini</taxon>
        <taxon>Cercopithecidae</taxon>
        <taxon>Cercopithecinae</taxon>
        <taxon>Macaca</taxon>
    </lineage>
</organism>
<evidence type="ECO:0000250" key="1">
    <source>
        <dbReference type="UniProtKB" id="P03901"/>
    </source>
</evidence>
<evidence type="ECO:0000250" key="2">
    <source>
        <dbReference type="UniProtKB" id="P03902"/>
    </source>
</evidence>
<evidence type="ECO:0000255" key="3"/>
<evidence type="ECO:0000305" key="4"/>
<dbReference type="EC" id="7.1.1.2"/>
<dbReference type="EMBL" id="AF091411">
    <property type="protein sequence ID" value="AAD24710.1"/>
    <property type="molecule type" value="Genomic_DNA"/>
</dbReference>
<dbReference type="SMR" id="Q9XK21"/>
<dbReference type="GO" id="GO:0005743">
    <property type="term" value="C:mitochondrial inner membrane"/>
    <property type="evidence" value="ECO:0000250"/>
    <property type="project" value="UniProtKB"/>
</dbReference>
<dbReference type="GO" id="GO:0045271">
    <property type="term" value="C:respiratory chain complex I"/>
    <property type="evidence" value="ECO:0000250"/>
    <property type="project" value="UniProtKB"/>
</dbReference>
<dbReference type="GO" id="GO:0008137">
    <property type="term" value="F:NADH dehydrogenase (ubiquinone) activity"/>
    <property type="evidence" value="ECO:0000250"/>
    <property type="project" value="UniProtKB"/>
</dbReference>
<dbReference type="GO" id="GO:0042773">
    <property type="term" value="P:ATP synthesis coupled electron transport"/>
    <property type="evidence" value="ECO:0007669"/>
    <property type="project" value="InterPro"/>
</dbReference>
<dbReference type="FunFam" id="1.10.287.3510:FF:000002">
    <property type="entry name" value="NADH-ubiquinone oxidoreductase chain 4L"/>
    <property type="match status" value="1"/>
</dbReference>
<dbReference type="Gene3D" id="1.10.287.3510">
    <property type="match status" value="1"/>
</dbReference>
<dbReference type="InterPro" id="IPR001133">
    <property type="entry name" value="NADH_UbQ_OxRdtase_chain4L/K"/>
</dbReference>
<dbReference type="InterPro" id="IPR039428">
    <property type="entry name" value="NUOK/Mnh_C1-like"/>
</dbReference>
<dbReference type="PANTHER" id="PTHR11434:SF0">
    <property type="entry name" value="NADH-UBIQUINONE OXIDOREDUCTASE CHAIN 4L"/>
    <property type="match status" value="1"/>
</dbReference>
<dbReference type="PANTHER" id="PTHR11434">
    <property type="entry name" value="NADH-UBIQUINONE OXIDOREDUCTASE SUBUNIT ND4L"/>
    <property type="match status" value="1"/>
</dbReference>
<dbReference type="Pfam" id="PF00420">
    <property type="entry name" value="Oxidored_q2"/>
    <property type="match status" value="1"/>
</dbReference>
<name>NU4LM_MACHE</name>
<proteinExistence type="inferred from homology"/>
<comment type="function">
    <text evidence="1">Core subunit of the mitochondrial membrane respiratory chain NADH dehydrogenase (Complex I) which catalyzes electron transfer from NADH through the respiratory chain, using ubiquinone as an electron acceptor. Part of the enzyme membrane arm which is embedded in the lipid bilayer and involved in proton translocation.</text>
</comment>
<comment type="catalytic activity">
    <reaction evidence="1">
        <text>a ubiquinone + NADH + 5 H(+)(in) = a ubiquinol + NAD(+) + 4 H(+)(out)</text>
        <dbReference type="Rhea" id="RHEA:29091"/>
        <dbReference type="Rhea" id="RHEA-COMP:9565"/>
        <dbReference type="Rhea" id="RHEA-COMP:9566"/>
        <dbReference type="ChEBI" id="CHEBI:15378"/>
        <dbReference type="ChEBI" id="CHEBI:16389"/>
        <dbReference type="ChEBI" id="CHEBI:17976"/>
        <dbReference type="ChEBI" id="CHEBI:57540"/>
        <dbReference type="ChEBI" id="CHEBI:57945"/>
        <dbReference type="EC" id="7.1.1.2"/>
    </reaction>
    <physiologicalReaction direction="left-to-right" evidence="1">
        <dbReference type="Rhea" id="RHEA:29092"/>
    </physiologicalReaction>
</comment>
<comment type="subunit">
    <text evidence="2">Core subunit of respiratory chain NADH dehydrogenase (Complex I) which is composed of 45 different subunits.</text>
</comment>
<comment type="subcellular location">
    <subcellularLocation>
        <location evidence="2">Mitochondrion inner membrane</location>
        <topology evidence="3">Multi-pass membrane protein</topology>
    </subcellularLocation>
</comment>
<comment type="similarity">
    <text evidence="4">Belongs to the complex I subunit 4L family.</text>
</comment>
<protein>
    <recommendedName>
        <fullName>NADH-ubiquinone oxidoreductase chain 4L</fullName>
        <ecNumber>7.1.1.2</ecNumber>
    </recommendedName>
    <alternativeName>
        <fullName>NADH dehydrogenase subunit 4L</fullName>
    </alternativeName>
</protein>
<accession>Q9XK21</accession>
<sequence length="98" mass="10797">MIPTYMNIMLAFTISLLGMLTYRSHLVASLLCLEGMMMSLFIMATLIASNTHFPLINIMPIILLVFAACEAAVGLALLISISNTYGLDYIHNLNLLQC</sequence>